<reference key="1">
    <citation type="journal article" date="1993" name="J. Biol. Chem.">
        <title>Characterization of the integrin specificities of disintegrins isolated from American pit viper venoms.</title>
        <authorList>
            <person name="Scarborough R.M."/>
            <person name="Rose J.W."/>
            <person name="Naughton M.A."/>
            <person name="Phillips D.R."/>
            <person name="Nannizzi L."/>
            <person name="Arfsten A."/>
            <person name="Campbell A.M."/>
            <person name="Charo I.F."/>
        </authorList>
    </citation>
    <scope>PROTEIN SEQUENCE</scope>
    <scope>SUBCELLULAR LOCATION</scope>
    <source>
        <tissue>Venom</tissue>
    </source>
</reference>
<dbReference type="PIR" id="G43019">
    <property type="entry name" value="G43019"/>
</dbReference>
<dbReference type="SMR" id="P31987"/>
<dbReference type="GO" id="GO:0005576">
    <property type="term" value="C:extracellular region"/>
    <property type="evidence" value="ECO:0007669"/>
    <property type="project" value="UniProtKB-SubCell"/>
</dbReference>
<dbReference type="GO" id="GO:0005886">
    <property type="term" value="C:plasma membrane"/>
    <property type="evidence" value="ECO:0007669"/>
    <property type="project" value="TreeGrafter"/>
</dbReference>
<dbReference type="GO" id="GO:0090729">
    <property type="term" value="F:toxin activity"/>
    <property type="evidence" value="ECO:0007669"/>
    <property type="project" value="UniProtKB-KW"/>
</dbReference>
<dbReference type="FunFam" id="4.10.70.10:FF:000005">
    <property type="entry name" value="Zinc metalloproteinase/disintegrin"/>
    <property type="match status" value="1"/>
</dbReference>
<dbReference type="Gene3D" id="4.10.70.10">
    <property type="entry name" value="Disintegrin domain"/>
    <property type="match status" value="1"/>
</dbReference>
<dbReference type="InterPro" id="IPR018358">
    <property type="entry name" value="Disintegrin_CS"/>
</dbReference>
<dbReference type="InterPro" id="IPR001762">
    <property type="entry name" value="Disintegrin_dom"/>
</dbReference>
<dbReference type="InterPro" id="IPR036436">
    <property type="entry name" value="Disintegrin_dom_sf"/>
</dbReference>
<dbReference type="PANTHER" id="PTHR11905">
    <property type="entry name" value="ADAM A DISINTEGRIN AND METALLOPROTEASE DOMAIN"/>
    <property type="match status" value="1"/>
</dbReference>
<dbReference type="PANTHER" id="PTHR11905:SF32">
    <property type="entry name" value="DISINTEGRIN AND METALLOPROTEINASE DOMAIN-CONTAINING PROTEIN 28"/>
    <property type="match status" value="1"/>
</dbReference>
<dbReference type="Pfam" id="PF00200">
    <property type="entry name" value="Disintegrin"/>
    <property type="match status" value="1"/>
</dbReference>
<dbReference type="PRINTS" id="PR00289">
    <property type="entry name" value="DISINTEGRIN"/>
</dbReference>
<dbReference type="SMART" id="SM00050">
    <property type="entry name" value="DISIN"/>
    <property type="match status" value="1"/>
</dbReference>
<dbReference type="SUPFAM" id="SSF57552">
    <property type="entry name" value="Blood coagulation inhibitor (disintegrin)"/>
    <property type="match status" value="1"/>
</dbReference>
<dbReference type="PROSITE" id="PS00427">
    <property type="entry name" value="DISINTEGRIN_1"/>
    <property type="match status" value="1"/>
</dbReference>
<dbReference type="PROSITE" id="PS50214">
    <property type="entry name" value="DISINTEGRIN_2"/>
    <property type="match status" value="1"/>
</dbReference>
<proteinExistence type="evidence at protein level"/>
<evidence type="ECO:0000250" key="1"/>
<evidence type="ECO:0000250" key="2">
    <source>
        <dbReference type="UniProtKB" id="Q0NZX5"/>
    </source>
</evidence>
<evidence type="ECO:0000255" key="3">
    <source>
        <dbReference type="PROSITE-ProRule" id="PRU00068"/>
    </source>
</evidence>
<evidence type="ECO:0000256" key="4">
    <source>
        <dbReference type="SAM" id="MobiDB-lite"/>
    </source>
</evidence>
<evidence type="ECO:0000269" key="5">
    <source>
    </source>
</evidence>
<evidence type="ECO:0000303" key="6">
    <source>
    </source>
</evidence>
<evidence type="ECO:0000305" key="7"/>
<keyword id="KW-1217">Cell adhesion impairing toxin</keyword>
<keyword id="KW-0903">Direct protein sequencing</keyword>
<keyword id="KW-1015">Disulfide bond</keyword>
<keyword id="KW-1199">Hemostasis impairing toxin</keyword>
<keyword id="KW-1201">Platelet aggregation inhibiting toxin</keyword>
<keyword id="KW-0964">Secreted</keyword>
<keyword id="KW-0800">Toxin</keyword>
<organism>
    <name type="scientific">Crotalus viridis viridis</name>
    <name type="common">Prairie rattlesnake</name>
    <dbReference type="NCBI Taxonomy" id="8742"/>
    <lineage>
        <taxon>Eukaryota</taxon>
        <taxon>Metazoa</taxon>
        <taxon>Chordata</taxon>
        <taxon>Craniata</taxon>
        <taxon>Vertebrata</taxon>
        <taxon>Euteleostomi</taxon>
        <taxon>Lepidosauria</taxon>
        <taxon>Squamata</taxon>
        <taxon>Bifurcata</taxon>
        <taxon>Unidentata</taxon>
        <taxon>Episquamata</taxon>
        <taxon>Toxicofera</taxon>
        <taxon>Serpentes</taxon>
        <taxon>Colubroidea</taxon>
        <taxon>Viperidae</taxon>
        <taxon>Crotalinae</taxon>
        <taxon>Crotalus</taxon>
    </lineage>
</organism>
<comment type="function">
    <text>Inhibits fibrinogen interaction with platelets. Acts by binding to alpha-IIb/beta-3 (ITGA2B/ITGB3) on the platelet surface and inhibits aggregation induced by ADP, thrombin, platelet-activating factor and collagen.</text>
</comment>
<comment type="subunit">
    <text evidence="1">Monomer (disintegrin).</text>
</comment>
<comment type="subcellular location">
    <subcellularLocation>
        <location evidence="5">Secreted</location>
    </subcellularLocation>
</comment>
<comment type="tissue specificity">
    <text evidence="5">Expressed by the venom gland.</text>
</comment>
<comment type="miscellaneous">
    <text>The disintegrin belongs to the medium disintegrin subfamily.</text>
</comment>
<comment type="similarity">
    <text evidence="7">Belongs to the venom metalloproteinase (M12B) family. P-II subfamily. P-IIa sub-subfamily.</text>
</comment>
<sequence>AGEECDCGSPANPCCDAATCKLRPGAQCADGLCCDQCRFIKKGKICRRARGDNPDDRCTGQSADCPRNRFH</sequence>
<accession>P31987</accession>
<protein>
    <recommendedName>
        <fullName evidence="6">Disintegrin viridin</fullName>
    </recommendedName>
    <alternativeName>
        <fullName>Platelet aggregation activation inhibitor</fullName>
    </alternativeName>
</protein>
<name>VM2I_CROVV</name>
<feature type="chain" id="PRO_0000101797" description="Disintegrin viridin" evidence="5">
    <location>
        <begin position="1"/>
        <end position="71"/>
    </location>
</feature>
<feature type="domain" description="Disintegrin" evidence="3">
    <location>
        <begin position="1"/>
        <end position="71"/>
    </location>
</feature>
<feature type="region of interest" description="Disordered" evidence="4">
    <location>
        <begin position="50"/>
        <end position="71"/>
    </location>
</feature>
<feature type="short sequence motif" description="Cell attachment site">
    <location>
        <begin position="50"/>
        <end position="52"/>
    </location>
</feature>
<feature type="disulfide bond" evidence="2">
    <location>
        <begin position="5"/>
        <end position="20"/>
    </location>
</feature>
<feature type="disulfide bond" evidence="2">
    <location>
        <begin position="7"/>
        <end position="15"/>
    </location>
</feature>
<feature type="disulfide bond" evidence="2">
    <location>
        <begin position="14"/>
        <end position="37"/>
    </location>
</feature>
<feature type="disulfide bond" evidence="2">
    <location>
        <begin position="28"/>
        <end position="34"/>
    </location>
</feature>
<feature type="disulfide bond" evidence="2">
    <location>
        <begin position="33"/>
        <end position="58"/>
    </location>
</feature>
<feature type="disulfide bond" evidence="2 3">
    <location>
        <begin position="46"/>
        <end position="65"/>
    </location>
</feature>